<sequence length="265" mass="29106">MSVPGEREQGAGEDPATVRPTQRTLVIIPTYNERENLPLIVGRVHHACPQVHILVVDDGSPDGTGALADELALADPDRVHVMHRTSKAGLGAAYLAGFDWGLRRGYSVLVEMDADGSHAPEELSRLLDAVDAGADLAIGSRYVPGGTVRNWPWRRLVLSKTANTYSRFLLGVGIHDITAGYRAYRREVLEKIDLSAVDSKGYCFQIDLTWRAINNGFSVVEVPITFTERELGVSKMSGSNIREAMFKVAEWGIRGRLDRARGVVR</sequence>
<evidence type="ECO:0000250" key="1">
    <source>
        <dbReference type="UniProtKB" id="O53493"/>
    </source>
</evidence>
<evidence type="ECO:0000256" key="2">
    <source>
        <dbReference type="SAM" id="MobiDB-lite"/>
    </source>
</evidence>
<evidence type="ECO:0000269" key="3">
    <source>
    </source>
</evidence>
<evidence type="ECO:0000269" key="4">
    <source>
    </source>
</evidence>
<evidence type="ECO:0000303" key="5">
    <source>
    </source>
</evidence>
<evidence type="ECO:0000305" key="6"/>
<evidence type="ECO:0000305" key="7">
    <source>
    </source>
</evidence>
<organism>
    <name type="scientific">Mycolicibacterium smegmatis (strain ATCC 700084 / mc(2)155)</name>
    <name type="common">Mycobacterium smegmatis</name>
    <dbReference type="NCBI Taxonomy" id="246196"/>
    <lineage>
        <taxon>Bacteria</taxon>
        <taxon>Bacillati</taxon>
        <taxon>Actinomycetota</taxon>
        <taxon>Actinomycetes</taxon>
        <taxon>Mycobacteriales</taxon>
        <taxon>Mycobacteriaceae</taxon>
        <taxon>Mycolicibacterium</taxon>
    </lineage>
</organism>
<name>PPM1_MYCS2</name>
<comment type="function">
    <text evidence="1 3 4">Transfers mannose from GDP-mannose to lipid acceptors to form polyprenol monophosphomannose (PPM); catalytic activity in vitro is enhanced by Lnt (AC A0QZ13) (PubMed:12427759). PMM is an alkai-stable sugar donor which adds mannose-phosphate residues to triacylated-PIM2, eventually leading to generation of the cell wall glycolipid lipoglycan modulins lipoarabinomannan (LAM) and lipomannan (LM) (By similarity).</text>
</comment>
<comment type="catalytic activity">
    <reaction evidence="3">
        <text>a di-trans,poly-cis-dolichyl phosphate + GDP-alpha-D-mannose = a di-trans,poly-cis-dolichyl beta-D-mannosyl phosphate + GDP</text>
        <dbReference type="Rhea" id="RHEA:21184"/>
        <dbReference type="Rhea" id="RHEA-COMP:19498"/>
        <dbReference type="Rhea" id="RHEA-COMP:19501"/>
        <dbReference type="ChEBI" id="CHEBI:57527"/>
        <dbReference type="ChEBI" id="CHEBI:57683"/>
        <dbReference type="ChEBI" id="CHEBI:58189"/>
        <dbReference type="ChEBI" id="CHEBI:58211"/>
        <dbReference type="EC" id="2.4.1.83"/>
    </reaction>
</comment>
<comment type="subunit">
    <text evidence="3">Interacts with Lnt (also called Ppm2, AC A0QZ13) upon coexpression in E.coli, which increases the PPM synthase activity of this protein.</text>
</comment>
<comment type="subcellular location">
    <subcellularLocation>
        <location evidence="3">Cytoplasm</location>
    </subcellularLocation>
</comment>
<comment type="disruption phenotype">
    <text evidence="4">Essential it cannot be deleted. In depletion experiments increasing amounts of phosphatidyl-myo-inositol (PI) and decreasing amounts of acylated PI mannosides (AcPIM), as well as decreased synthesis of lipomannan (LM) but not lipoarabinomannan (LAM) are observed.</text>
</comment>
<comment type="miscellaneous">
    <text evidence="7">In a number of other Mycobacteria, including M.bovis and M.tuberculosis, this protein is the first domain in a 2 domain protein.</text>
</comment>
<comment type="similarity">
    <text evidence="6">Belongs to the glycosyltransferase 2 family.</text>
</comment>
<proteinExistence type="evidence at protein level"/>
<keyword id="KW-0963">Cytoplasm</keyword>
<keyword id="KW-0328">Glycosyltransferase</keyword>
<keyword id="KW-1185">Reference proteome</keyword>
<keyword id="KW-0808">Transferase</keyword>
<feature type="chain" id="PRO_0000434584" description="Polyprenol monophosphomannose synthase">
    <location>
        <begin position="1"/>
        <end position="265"/>
    </location>
</feature>
<feature type="region of interest" description="Disordered" evidence="2">
    <location>
        <begin position="1"/>
        <end position="21"/>
    </location>
</feature>
<feature type="compositionally biased region" description="Basic and acidic residues" evidence="2">
    <location>
        <begin position="1"/>
        <end position="10"/>
    </location>
</feature>
<reference key="1">
    <citation type="submission" date="2006-10" db="EMBL/GenBank/DDBJ databases">
        <authorList>
            <person name="Fleischmann R.D."/>
            <person name="Dodson R.J."/>
            <person name="Haft D.H."/>
            <person name="Merkel J.S."/>
            <person name="Nelson W.C."/>
            <person name="Fraser C.M."/>
        </authorList>
    </citation>
    <scope>NUCLEOTIDE SEQUENCE [LARGE SCALE GENOMIC DNA]</scope>
    <source>
        <strain>ATCC 700084 / mc(2)155</strain>
    </source>
</reference>
<reference key="2">
    <citation type="journal article" date="2007" name="Genome Biol.">
        <title>Interrupted coding sequences in Mycobacterium smegmatis: authentic mutations or sequencing errors?</title>
        <authorList>
            <person name="Deshayes C."/>
            <person name="Perrodou E."/>
            <person name="Gallien S."/>
            <person name="Euphrasie D."/>
            <person name="Schaeffer C."/>
            <person name="Van-Dorsselaer A."/>
            <person name="Poch O."/>
            <person name="Lecompte O."/>
            <person name="Reyrat J.-M."/>
        </authorList>
    </citation>
    <scope>NUCLEOTIDE SEQUENCE [LARGE SCALE GENOMIC DNA]</scope>
    <source>
        <strain>ATCC 700084 / mc(2)155</strain>
    </source>
</reference>
<reference key="3">
    <citation type="journal article" date="2009" name="Genome Res.">
        <title>Ortho-proteogenomics: multiple proteomes investigation through orthology and a new MS-based protocol.</title>
        <authorList>
            <person name="Gallien S."/>
            <person name="Perrodou E."/>
            <person name="Carapito C."/>
            <person name="Deshayes C."/>
            <person name="Reyrat J.-M."/>
            <person name="Van Dorsselaer A."/>
            <person name="Poch O."/>
            <person name="Schaeffer C."/>
            <person name="Lecompte O."/>
        </authorList>
    </citation>
    <scope>NUCLEOTIDE SEQUENCE [LARGE SCALE GENOMIC DNA]</scope>
    <source>
        <strain>ATCC 700084 / mc(2)155</strain>
    </source>
</reference>
<reference key="4">
    <citation type="journal article" date="2003" name="J. Biol. Chem.">
        <title>In vivo interaction between the polyprenol phosphate mannose synthase Ppm1 and the integral membrane protein Ppm2 from Mycobacterium smegmatis revealed by a bacterial two-hybrid system.</title>
        <authorList>
            <person name="Baulard A.R."/>
            <person name="Gurcha S.S."/>
            <person name="Engohang-Ndong J."/>
            <person name="Gouffi K."/>
            <person name="Locht C."/>
            <person name="Besra G.S."/>
        </authorList>
    </citation>
    <scope>FUNCTION</scope>
    <scope>CATALYTIC ACTIVITY</scope>
    <scope>SUBUNIT</scope>
    <scope>SUBCELLULAR LOCATION</scope>
    <scope>EXPRESSION IN E.COLI</scope>
</reference>
<reference key="5">
    <citation type="journal article" date="2012" name="PLoS ONE">
        <title>Ppm1-encoded polyprenyl monophosphomannose synthase activity is essential for lipoglycan synthesis and survival in mycobacteria.</title>
        <authorList>
            <person name="Rana A.K."/>
            <person name="Singh A."/>
            <person name="Gurcha S.S."/>
            <person name="Cox L.R."/>
            <person name="Bhatt A."/>
            <person name="Besra G.S."/>
        </authorList>
    </citation>
    <scope>FUNCTION</scope>
    <scope>CATALYTIC ACTIVITY</scope>
    <scope>DISRUPTION PHENOTYPE</scope>
    <source>
        <strain>ATCC 700084 / mc(2)155</strain>
    </source>
</reference>
<gene>
    <name evidence="5" type="primary">ppm1</name>
    <name type="ordered locus">MSMEG_3859</name>
    <name type="ordered locus">MSMEI_3769</name>
</gene>
<protein>
    <recommendedName>
        <fullName>Polyprenol monophosphomannose synthase</fullName>
        <shortName>PPM synthase</shortName>
        <shortName evidence="5">Polyprenol-P-Man synthase</shortName>
        <shortName evidence="5">Ppm1</shortName>
        <ecNumber evidence="4">2.4.1.-</ecNumber>
    </recommendedName>
    <alternativeName>
        <fullName evidence="5">Dolichol-phosphate mannose synthase</fullName>
        <ecNumber evidence="3">2.4.1.83</ecNumber>
    </alternativeName>
</protein>
<dbReference type="EC" id="2.4.1.-" evidence="4"/>
<dbReference type="EC" id="2.4.1.83" evidence="3"/>
<dbReference type="EMBL" id="CP000480">
    <property type="protein sequence ID" value="ABK72511.1"/>
    <property type="molecule type" value="Genomic_DNA"/>
</dbReference>
<dbReference type="EMBL" id="CP001663">
    <property type="protein sequence ID" value="AFP40227.1"/>
    <property type="molecule type" value="Genomic_DNA"/>
</dbReference>
<dbReference type="RefSeq" id="WP_003895306.1">
    <property type="nucleotide sequence ID" value="NZ_SIJM01000005.1"/>
</dbReference>
<dbReference type="RefSeq" id="YP_888150.1">
    <property type="nucleotide sequence ID" value="NC_008596.1"/>
</dbReference>
<dbReference type="SMR" id="A0QZ12"/>
<dbReference type="STRING" id="246196.MSMEG_3859"/>
<dbReference type="CAZy" id="GT2">
    <property type="family name" value="Glycosyltransferase Family 2"/>
</dbReference>
<dbReference type="PaxDb" id="246196-MSMEI_3769"/>
<dbReference type="KEGG" id="msb:LJ00_19165"/>
<dbReference type="KEGG" id="msg:MSMEI_3769"/>
<dbReference type="KEGG" id="msm:MSMEG_3859"/>
<dbReference type="PATRIC" id="fig|246196.19.peg.3798"/>
<dbReference type="eggNOG" id="COG0463">
    <property type="taxonomic scope" value="Bacteria"/>
</dbReference>
<dbReference type="OrthoDB" id="9810303at2"/>
<dbReference type="Proteomes" id="UP000000757">
    <property type="component" value="Chromosome"/>
</dbReference>
<dbReference type="Proteomes" id="UP000006158">
    <property type="component" value="Chromosome"/>
</dbReference>
<dbReference type="GO" id="GO:0005737">
    <property type="term" value="C:cytoplasm"/>
    <property type="evidence" value="ECO:0007669"/>
    <property type="project" value="UniProtKB-SubCell"/>
</dbReference>
<dbReference type="GO" id="GO:0016020">
    <property type="term" value="C:membrane"/>
    <property type="evidence" value="ECO:0007669"/>
    <property type="project" value="GOC"/>
</dbReference>
<dbReference type="GO" id="GO:0004582">
    <property type="term" value="F:dolichyl-phosphate beta-D-mannosyltransferase activity"/>
    <property type="evidence" value="ECO:0007669"/>
    <property type="project" value="UniProtKB-EC"/>
</dbReference>
<dbReference type="GO" id="GO:0009247">
    <property type="term" value="P:glycolipid biosynthetic process"/>
    <property type="evidence" value="ECO:0007669"/>
    <property type="project" value="TreeGrafter"/>
</dbReference>
<dbReference type="CDD" id="cd06442">
    <property type="entry name" value="DPM1_like"/>
    <property type="match status" value="1"/>
</dbReference>
<dbReference type="FunFam" id="3.90.550.10:FF:000122">
    <property type="entry name" value="Dolichol-phosphate mannosyltransferase subunit 1"/>
    <property type="match status" value="1"/>
</dbReference>
<dbReference type="Gene3D" id="3.90.550.10">
    <property type="entry name" value="Spore Coat Polysaccharide Biosynthesis Protein SpsA, Chain A"/>
    <property type="match status" value="1"/>
</dbReference>
<dbReference type="InterPro" id="IPR039528">
    <property type="entry name" value="DPM1-like"/>
</dbReference>
<dbReference type="InterPro" id="IPR001173">
    <property type="entry name" value="Glyco_trans_2-like"/>
</dbReference>
<dbReference type="InterPro" id="IPR029044">
    <property type="entry name" value="Nucleotide-diphossugar_trans"/>
</dbReference>
<dbReference type="PANTHER" id="PTHR43398">
    <property type="entry name" value="DOLICHOL-PHOSPHATE MANNOSYLTRANSFERASE SUBUNIT 1"/>
    <property type="match status" value="1"/>
</dbReference>
<dbReference type="PANTHER" id="PTHR43398:SF1">
    <property type="entry name" value="DOLICHOL-PHOSPHATE MANNOSYLTRANSFERASE SUBUNIT 1"/>
    <property type="match status" value="1"/>
</dbReference>
<dbReference type="Pfam" id="PF00535">
    <property type="entry name" value="Glycos_transf_2"/>
    <property type="match status" value="1"/>
</dbReference>
<dbReference type="SUPFAM" id="SSF53448">
    <property type="entry name" value="Nucleotide-diphospho-sugar transferases"/>
    <property type="match status" value="1"/>
</dbReference>
<accession>A0QZ12</accession>